<reference key="1">
    <citation type="journal article" date="2009" name="PLoS ONE">
        <title>Identification and gene expression analysis of a taxonomically restricted cysteine-rich protein family in reef-building corals.</title>
        <authorList>
            <person name="Sunagawa S."/>
            <person name="DeSalvo M.K."/>
            <person name="Voolstra C.R."/>
            <person name="Reyes-Bermudez A."/>
            <person name="Medina M."/>
        </authorList>
    </citation>
    <scope>NUCLEOTIDE SEQUENCE [MRNA]</scope>
</reference>
<reference key="2">
    <citation type="journal article" date="2024" name="Toxins">
        <title>Evolutionary analysis of cnidaria small cysteine-rich proteins (scrips), an enigmatic neurotoxin family from stony corals and sea anemones (Anthozoa: Hexacorallia).</title>
        <authorList>
            <person name="Barroso R.A."/>
            <person name="Ramos L."/>
            <person name="Moreno H."/>
            <person name="Antunes A."/>
        </authorList>
    </citation>
    <scope>NOMENCLATURE</scope>
</reference>
<dbReference type="EMBL" id="FJ842106">
    <property type="protein sequence ID" value="ACO24834.1"/>
    <property type="molecule type" value="mRNA"/>
</dbReference>
<dbReference type="GO" id="GO:0005576">
    <property type="term" value="C:extracellular region"/>
    <property type="evidence" value="ECO:0007669"/>
    <property type="project" value="UniProtKB-SubCell"/>
</dbReference>
<dbReference type="GO" id="GO:0042151">
    <property type="term" value="C:nematocyst"/>
    <property type="evidence" value="ECO:0007669"/>
    <property type="project" value="UniProtKB-SubCell"/>
</dbReference>
<dbReference type="GO" id="GO:0090729">
    <property type="term" value="F:toxin activity"/>
    <property type="evidence" value="ECO:0007669"/>
    <property type="project" value="UniProtKB-KW"/>
</dbReference>
<protein>
    <recommendedName>
        <fullName evidence="4">Small cysteine-rich protein 4</fullName>
        <shortName evidence="4">Mfav-SCRiP8</shortName>
        <shortName evidence="4">SCRiP4</shortName>
    </recommendedName>
</protein>
<keyword id="KW-0165">Cleavage on pair of basic residues</keyword>
<keyword id="KW-1015">Disulfide bond</keyword>
<keyword id="KW-0166">Nematocyst</keyword>
<keyword id="KW-0528">Neurotoxin</keyword>
<keyword id="KW-0964">Secreted</keyword>
<keyword id="KW-0732">Signal</keyword>
<keyword id="KW-0800">Toxin</keyword>
<sequence>MDTKVACLLLIILGALTVQGAVSGNKRMNLHARQWGGIERECMNNGEEQCFPMGQCPGGFRECSEYYCGSPSLGCCCWDEW</sequence>
<organism>
    <name type="scientific">Orbicella faveolata</name>
    <name type="common">Mountainous star coral</name>
    <name type="synonym">Montastraea faveolata</name>
    <dbReference type="NCBI Taxonomy" id="48498"/>
    <lineage>
        <taxon>Eukaryota</taxon>
        <taxon>Metazoa</taxon>
        <taxon>Cnidaria</taxon>
        <taxon>Anthozoa</taxon>
        <taxon>Hexacorallia</taxon>
        <taxon>Scleractinia</taxon>
        <taxon>Faviina</taxon>
        <taxon>Merulinidae</taxon>
        <taxon>Orbicella</taxon>
    </lineage>
</organism>
<name>SCR4B_ORBFA</name>
<evidence type="ECO:0000250" key="1">
    <source>
        <dbReference type="UniProtKB" id="C0H691"/>
    </source>
</evidence>
<evidence type="ECO:0000250" key="2">
    <source>
        <dbReference type="UniProtKB" id="C0H692"/>
    </source>
</evidence>
<evidence type="ECO:0000255" key="3"/>
<evidence type="ECO:0000303" key="4">
    <source>
    </source>
</evidence>
<evidence type="ECO:0000305" key="5"/>
<evidence type="ECO:0000305" key="6">
    <source>
    </source>
</evidence>
<evidence type="ECO:0000305" key="7">
    <source>
    </source>
</evidence>
<comment type="function">
    <text evidence="1 2 6">Induces neurotoxic symptoms on zebrafish (By similarity). Has also been claimed to be implied in calcification, but tests on homolog proteins suggest that proteins of this family have a neurotoxic function and not a calcification function (PubMed:19283069).</text>
</comment>
<comment type="subcellular location">
    <subcellularLocation>
        <location>Secreted</location>
    </subcellularLocation>
    <subcellularLocation>
        <location evidence="5">Nematocyst</location>
    </subcellularLocation>
</comment>
<comment type="PTM">
    <text evidence="5">Contains 4 disulfide bonds.</text>
</comment>
<comment type="similarity">
    <text evidence="7">Belongs to the Cnidaria small cysteine-rich protein (SCRiP) family. beta subfamily.</text>
</comment>
<accession>C1KIZ3</accession>
<feature type="signal peptide" evidence="3">
    <location>
        <begin position="1"/>
        <end position="23"/>
    </location>
</feature>
<feature type="propeptide" id="PRO_0000434284" evidence="5">
    <location>
        <begin position="24"/>
        <end position="25"/>
    </location>
</feature>
<feature type="chain" id="PRO_0000434285" description="Small cysteine-rich protein 4">
    <location>
        <begin position="28"/>
        <end position="81"/>
    </location>
</feature>
<proteinExistence type="inferred from homology"/>